<gene>
    <name type="primary">CYP71A4</name>
    <name type="synonym">CYPEG2</name>
</gene>
<comment type="function">
    <text>May have a role in maturation, such as during flavor formation or other metabolite production specific to aging tissues.</text>
</comment>
<comment type="cofactor">
    <cofactor evidence="1">
        <name>heme</name>
        <dbReference type="ChEBI" id="CHEBI:30413"/>
    </cofactor>
</comment>
<comment type="subcellular location">
    <subcellularLocation>
        <location evidence="3">Membrane</location>
        <topology evidence="3">Single-pass membrane protein</topology>
    </subcellularLocation>
</comment>
<comment type="similarity">
    <text evidence="3">Belongs to the cytochrome P450 family.</text>
</comment>
<name>C71A4_SOLME</name>
<protein>
    <recommendedName>
        <fullName>Cytochrome P450 71A4</fullName>
        <ecNumber>1.14.-.-</ecNumber>
    </recommendedName>
    <alternativeName>
        <fullName>CYPLXXIA4</fullName>
    </alternativeName>
    <alternativeName>
        <fullName>Cytochrome P-450EG2</fullName>
    </alternativeName>
</protein>
<accession>P37117</accession>
<reference key="1">
    <citation type="journal article" date="1993" name="FEBS Lett.">
        <title>cDNAs sequences encoding cytochrome P450 (CYP71 family) from eggplant seedlings.</title>
        <authorList>
            <person name="Umemoto N."/>
            <person name="Kobayashi O."/>
            <person name="Ishizaki-Nishizawa O."/>
            <person name="Toguri T."/>
        </authorList>
    </citation>
    <scope>NUCLEOTIDE SEQUENCE [MRNA]</scope>
    <source>
        <strain>cv. Sinsadoharanasu</strain>
        <tissue>Hypocotyl</tissue>
    </source>
</reference>
<evidence type="ECO:0000250" key="1"/>
<evidence type="ECO:0000255" key="2"/>
<evidence type="ECO:0000305" key="3"/>
<feature type="chain" id="PRO_0000052059" description="Cytochrome P450 71A4">
    <location>
        <begin position="1"/>
        <end position="507"/>
    </location>
</feature>
<feature type="transmembrane region" description="Helical" evidence="2">
    <location>
        <begin position="3"/>
        <end position="23"/>
    </location>
</feature>
<feature type="binding site" description="axial binding residue" evidence="1">
    <location>
        <position position="448"/>
    </location>
    <ligand>
        <name>heme</name>
        <dbReference type="ChEBI" id="CHEBI:30413"/>
    </ligand>
    <ligandPart>
        <name>Fe</name>
        <dbReference type="ChEBI" id="CHEBI:18248"/>
    </ligandPart>
</feature>
<organism>
    <name type="scientific">Solanum melongena</name>
    <name type="common">Eggplant</name>
    <name type="synonym">Aubergine</name>
    <dbReference type="NCBI Taxonomy" id="223891"/>
    <lineage>
        <taxon>Eukaryota</taxon>
        <taxon>Viridiplantae</taxon>
        <taxon>Streptophyta</taxon>
        <taxon>Embryophyta</taxon>
        <taxon>Tracheophyta</taxon>
        <taxon>Spermatophyta</taxon>
        <taxon>Magnoliopsida</taxon>
        <taxon>eudicotyledons</taxon>
        <taxon>Gunneridae</taxon>
        <taxon>Pentapetalae</taxon>
        <taxon>asterids</taxon>
        <taxon>lamiids</taxon>
        <taxon>Solanales</taxon>
        <taxon>Solanaceae</taxon>
        <taxon>Solanoideae</taxon>
        <taxon>Solaneae</taxon>
        <taxon>Solanum</taxon>
    </lineage>
</organism>
<proteinExistence type="evidence at transcript level"/>
<sequence>MDVPCLWYSLLILLLLFIFLLIHHCFTTSKTQNMFLPPSPRKLPIIGNLHQLGSHPHRSLRKLSQKYGPVMLLHLGSKPVIVASSVDAARDILKTHDHVWATRPKYSIADSLLYGSKDVGFSPFGEYWWQVRSIVVLHLLSNKRVQSYRDVREEETANMIEKIRQGCDASVINLGEHLCFLTNNITSRVALGRTYDERESGIDAKDILEQFLQLLDTFNVGDYIPWLKWVNKITGLDTKVEKIAKKLDTFLDSVIEEHIIRNKKEEYAITDEAKDFVDVLLEIQNGKETDFPLQRDSLKAILLDAFAAGTDTIYTNLDWTMADVLRQPRAMKTLQNEVRGLAQGKSEITEDDLKNMQYLRAVIKESLRLHPPNSLLVPRESMEDVKLLGYYHIPARTQALINVWAIGRDPLSWENPEEFCPERFLNNDIDMKGLKFELLPFGSGRRGCPGSSFAIAVIELALARLVHKFNFALPKGTKPEDLDMTECTGIATRRKSPLPVVATPFSG</sequence>
<keyword id="KW-0349">Heme</keyword>
<keyword id="KW-0408">Iron</keyword>
<keyword id="KW-0472">Membrane</keyword>
<keyword id="KW-0479">Metal-binding</keyword>
<keyword id="KW-0503">Monooxygenase</keyword>
<keyword id="KW-0560">Oxidoreductase</keyword>
<keyword id="KW-0812">Transmembrane</keyword>
<keyword id="KW-1133">Transmembrane helix</keyword>
<dbReference type="EC" id="1.14.-.-"/>
<dbReference type="EMBL" id="X70981">
    <property type="protein sequence ID" value="CAA50312.1"/>
    <property type="molecule type" value="mRNA"/>
</dbReference>
<dbReference type="PIR" id="S36805">
    <property type="entry name" value="S36805"/>
</dbReference>
<dbReference type="SMR" id="P37117"/>
<dbReference type="GO" id="GO:0016020">
    <property type="term" value="C:membrane"/>
    <property type="evidence" value="ECO:0007669"/>
    <property type="project" value="UniProtKB-SubCell"/>
</dbReference>
<dbReference type="GO" id="GO:0020037">
    <property type="term" value="F:heme binding"/>
    <property type="evidence" value="ECO:0007669"/>
    <property type="project" value="InterPro"/>
</dbReference>
<dbReference type="GO" id="GO:0005506">
    <property type="term" value="F:iron ion binding"/>
    <property type="evidence" value="ECO:0007669"/>
    <property type="project" value="InterPro"/>
</dbReference>
<dbReference type="GO" id="GO:0004497">
    <property type="term" value="F:monooxygenase activity"/>
    <property type="evidence" value="ECO:0007669"/>
    <property type="project" value="UniProtKB-KW"/>
</dbReference>
<dbReference type="GO" id="GO:0016705">
    <property type="term" value="F:oxidoreductase activity, acting on paired donors, with incorporation or reduction of molecular oxygen"/>
    <property type="evidence" value="ECO:0007669"/>
    <property type="project" value="InterPro"/>
</dbReference>
<dbReference type="CDD" id="cd11072">
    <property type="entry name" value="CYP71-like"/>
    <property type="match status" value="1"/>
</dbReference>
<dbReference type="FunFam" id="1.10.630.10:FF:000011">
    <property type="entry name" value="Cytochrome P450 83B1"/>
    <property type="match status" value="1"/>
</dbReference>
<dbReference type="Gene3D" id="1.10.630.10">
    <property type="entry name" value="Cytochrome P450"/>
    <property type="match status" value="1"/>
</dbReference>
<dbReference type="InterPro" id="IPR001128">
    <property type="entry name" value="Cyt_P450"/>
</dbReference>
<dbReference type="InterPro" id="IPR017972">
    <property type="entry name" value="Cyt_P450_CS"/>
</dbReference>
<dbReference type="InterPro" id="IPR002401">
    <property type="entry name" value="Cyt_P450_E_grp-I"/>
</dbReference>
<dbReference type="InterPro" id="IPR036396">
    <property type="entry name" value="Cyt_P450_sf"/>
</dbReference>
<dbReference type="PANTHER" id="PTHR47955:SF15">
    <property type="entry name" value="CYTOCHROME P450 71A2-LIKE"/>
    <property type="match status" value="1"/>
</dbReference>
<dbReference type="PANTHER" id="PTHR47955">
    <property type="entry name" value="CYTOCHROME P450 FAMILY 71 PROTEIN"/>
    <property type="match status" value="1"/>
</dbReference>
<dbReference type="Pfam" id="PF00067">
    <property type="entry name" value="p450"/>
    <property type="match status" value="1"/>
</dbReference>
<dbReference type="PRINTS" id="PR00463">
    <property type="entry name" value="EP450I"/>
</dbReference>
<dbReference type="PRINTS" id="PR00385">
    <property type="entry name" value="P450"/>
</dbReference>
<dbReference type="SUPFAM" id="SSF48264">
    <property type="entry name" value="Cytochrome P450"/>
    <property type="match status" value="1"/>
</dbReference>
<dbReference type="PROSITE" id="PS00086">
    <property type="entry name" value="CYTOCHROME_P450"/>
    <property type="match status" value="1"/>
</dbReference>